<comment type="function">
    <text evidence="1">The key enzymatic reactions in nitrogen fixation are catalyzed by the nitrogenase complex, which has 2 components: the iron protein and the molybdenum-iron protein.</text>
</comment>
<comment type="catalytic activity">
    <reaction evidence="1">
        <text>N2 + 8 reduced [2Fe-2S]-[ferredoxin] + 16 ATP + 16 H2O = H2 + 8 oxidized [2Fe-2S]-[ferredoxin] + 2 NH4(+) + 16 ADP + 16 phosphate + 6 H(+)</text>
        <dbReference type="Rhea" id="RHEA:21448"/>
        <dbReference type="Rhea" id="RHEA-COMP:10000"/>
        <dbReference type="Rhea" id="RHEA-COMP:10001"/>
        <dbReference type="ChEBI" id="CHEBI:15377"/>
        <dbReference type="ChEBI" id="CHEBI:15378"/>
        <dbReference type="ChEBI" id="CHEBI:17997"/>
        <dbReference type="ChEBI" id="CHEBI:18276"/>
        <dbReference type="ChEBI" id="CHEBI:28938"/>
        <dbReference type="ChEBI" id="CHEBI:30616"/>
        <dbReference type="ChEBI" id="CHEBI:33737"/>
        <dbReference type="ChEBI" id="CHEBI:33738"/>
        <dbReference type="ChEBI" id="CHEBI:43474"/>
        <dbReference type="ChEBI" id="CHEBI:456216"/>
        <dbReference type="EC" id="1.18.6.1"/>
    </reaction>
</comment>
<comment type="cofactor">
    <cofactor evidence="1">
        <name>[4Fe-4S] cluster</name>
        <dbReference type="ChEBI" id="CHEBI:49883"/>
    </cofactor>
    <text evidence="1">Binds 1 [4Fe-4S] cluster per dimer.</text>
</comment>
<comment type="subunit">
    <text evidence="1">Homodimer.</text>
</comment>
<comment type="PTM">
    <text evidence="1">The reversible ADP-ribosylation of Arg-102 inactivates the nitrogenase reductase and regulates nitrogenase activity.</text>
</comment>
<comment type="similarity">
    <text evidence="1">Belongs to the NifH/BchL/ChlL family.</text>
</comment>
<evidence type="ECO:0000255" key="1">
    <source>
        <dbReference type="HAMAP-Rule" id="MF_00533"/>
    </source>
</evidence>
<sequence>MGKLRQIAFYGKGGIGKSTTSQNTLAALVEMGQKILIVGCDPKADSTRLILNTKLQDTVLHLAAEAGSVEDLELEDVVKIGYKGIKCTEAGGPEPGVGCAGRGVITAINFLEENGAYDDVDYVSYDVLGDVVCGGFAMPIRENKAQEIYIVMSGEMMALYAANNIAKGILKYANSGGVRLGGLICNERKTDRELELAEALAARLGCKMIHFVPRDNIVQHAELRRETVIQYAPESKQAQEYRELARKIHENSGKGVIPTPITMEELEEMLMDFGIMQSEEDRLAAIAAAEA</sequence>
<dbReference type="EC" id="1.18.6.1" evidence="1"/>
<dbReference type="EMBL" id="CP000143">
    <property type="protein sequence ID" value="ABA79713.1"/>
    <property type="molecule type" value="Genomic_DNA"/>
</dbReference>
<dbReference type="RefSeq" id="WP_002720705.1">
    <property type="nucleotide sequence ID" value="NZ_CP030271.1"/>
</dbReference>
<dbReference type="RefSeq" id="YP_353614.1">
    <property type="nucleotide sequence ID" value="NC_007493.2"/>
</dbReference>
<dbReference type="SMR" id="Q3J0H1"/>
<dbReference type="STRING" id="272943.RSP_0541"/>
<dbReference type="EnsemblBacteria" id="ABA79713">
    <property type="protein sequence ID" value="ABA79713"/>
    <property type="gene ID" value="RSP_0541"/>
</dbReference>
<dbReference type="GeneID" id="67447273"/>
<dbReference type="KEGG" id="rsp:RSP_0541"/>
<dbReference type="PATRIC" id="fig|272943.9.peg.2490"/>
<dbReference type="eggNOG" id="COG1348">
    <property type="taxonomic scope" value="Bacteria"/>
</dbReference>
<dbReference type="OrthoDB" id="9778641at2"/>
<dbReference type="PhylomeDB" id="Q3J0H1"/>
<dbReference type="Proteomes" id="UP000002703">
    <property type="component" value="Chromosome 1"/>
</dbReference>
<dbReference type="GO" id="GO:0051539">
    <property type="term" value="F:4 iron, 4 sulfur cluster binding"/>
    <property type="evidence" value="ECO:0007669"/>
    <property type="project" value="UniProtKB-KW"/>
</dbReference>
<dbReference type="GO" id="GO:0005524">
    <property type="term" value="F:ATP binding"/>
    <property type="evidence" value="ECO:0007669"/>
    <property type="project" value="UniProtKB-UniRule"/>
</dbReference>
<dbReference type="GO" id="GO:0046872">
    <property type="term" value="F:metal ion binding"/>
    <property type="evidence" value="ECO:0007669"/>
    <property type="project" value="UniProtKB-KW"/>
</dbReference>
<dbReference type="GO" id="GO:0016163">
    <property type="term" value="F:nitrogenase activity"/>
    <property type="evidence" value="ECO:0007669"/>
    <property type="project" value="UniProtKB-UniRule"/>
</dbReference>
<dbReference type="GO" id="GO:0009399">
    <property type="term" value="P:nitrogen fixation"/>
    <property type="evidence" value="ECO:0007669"/>
    <property type="project" value="UniProtKB-UniRule"/>
</dbReference>
<dbReference type="CDD" id="cd02040">
    <property type="entry name" value="NifH"/>
    <property type="match status" value="1"/>
</dbReference>
<dbReference type="FunFam" id="3.40.50.300:FF:001379">
    <property type="entry name" value="Nitrogenase iron protein 1"/>
    <property type="match status" value="1"/>
</dbReference>
<dbReference type="Gene3D" id="3.40.50.300">
    <property type="entry name" value="P-loop containing nucleotide triphosphate hydrolases"/>
    <property type="match status" value="1"/>
</dbReference>
<dbReference type="HAMAP" id="MF_00533">
    <property type="entry name" value="NifH"/>
    <property type="match status" value="1"/>
</dbReference>
<dbReference type="InterPro" id="IPR030655">
    <property type="entry name" value="NifH/chlL_CS"/>
</dbReference>
<dbReference type="InterPro" id="IPR000392">
    <property type="entry name" value="NifH/frxC"/>
</dbReference>
<dbReference type="InterPro" id="IPR005977">
    <property type="entry name" value="Nitrogenase_Fe_NifH"/>
</dbReference>
<dbReference type="InterPro" id="IPR027417">
    <property type="entry name" value="P-loop_NTPase"/>
</dbReference>
<dbReference type="NCBIfam" id="TIGR01287">
    <property type="entry name" value="nifH"/>
    <property type="match status" value="1"/>
</dbReference>
<dbReference type="PANTHER" id="PTHR42864">
    <property type="entry name" value="LIGHT-INDEPENDENT PROTOCHLOROPHYLLIDE REDUCTASE IRON-SULFUR ATP-BINDING PROTEIN"/>
    <property type="match status" value="1"/>
</dbReference>
<dbReference type="PANTHER" id="PTHR42864:SF2">
    <property type="entry name" value="LIGHT-INDEPENDENT PROTOCHLOROPHYLLIDE REDUCTASE IRON-SULFUR ATP-BINDING PROTEIN"/>
    <property type="match status" value="1"/>
</dbReference>
<dbReference type="Pfam" id="PF00142">
    <property type="entry name" value="Fer4_NifH"/>
    <property type="match status" value="1"/>
</dbReference>
<dbReference type="PIRSF" id="PIRSF000363">
    <property type="entry name" value="Nitrogenase_iron"/>
    <property type="match status" value="1"/>
</dbReference>
<dbReference type="PRINTS" id="PR00091">
    <property type="entry name" value="NITROGNASEII"/>
</dbReference>
<dbReference type="SUPFAM" id="SSF52540">
    <property type="entry name" value="P-loop containing nucleoside triphosphate hydrolases"/>
    <property type="match status" value="1"/>
</dbReference>
<dbReference type="PROSITE" id="PS00746">
    <property type="entry name" value="NIFH_FRXC_1"/>
    <property type="match status" value="1"/>
</dbReference>
<dbReference type="PROSITE" id="PS00692">
    <property type="entry name" value="NIFH_FRXC_2"/>
    <property type="match status" value="1"/>
</dbReference>
<dbReference type="PROSITE" id="PS51026">
    <property type="entry name" value="NIFH_FRXC_3"/>
    <property type="match status" value="1"/>
</dbReference>
<keyword id="KW-0004">4Fe-4S</keyword>
<keyword id="KW-0013">ADP-ribosylation</keyword>
<keyword id="KW-0067">ATP-binding</keyword>
<keyword id="KW-0408">Iron</keyword>
<keyword id="KW-0411">Iron-sulfur</keyword>
<keyword id="KW-0479">Metal-binding</keyword>
<keyword id="KW-0535">Nitrogen fixation</keyword>
<keyword id="KW-0547">Nucleotide-binding</keyword>
<keyword id="KW-0560">Oxidoreductase</keyword>
<keyword id="KW-1185">Reference proteome</keyword>
<protein>
    <recommendedName>
        <fullName evidence="1">Nitrogenase iron protein</fullName>
        <ecNumber evidence="1">1.18.6.1</ecNumber>
    </recommendedName>
    <alternativeName>
        <fullName evidence="1">Nitrogenase Fe protein</fullName>
    </alternativeName>
    <alternativeName>
        <fullName evidence="1">Nitrogenase component II</fullName>
    </alternativeName>
    <alternativeName>
        <fullName evidence="1">Nitrogenase reductase</fullName>
    </alternativeName>
</protein>
<reference key="1">
    <citation type="submission" date="2005-09" db="EMBL/GenBank/DDBJ databases">
        <title>Complete sequence of chromosome 1 of Rhodobacter sphaeroides 2.4.1.</title>
        <authorList>
            <person name="Copeland A."/>
            <person name="Lucas S."/>
            <person name="Lapidus A."/>
            <person name="Barry K."/>
            <person name="Detter J.C."/>
            <person name="Glavina T."/>
            <person name="Hammon N."/>
            <person name="Israni S."/>
            <person name="Pitluck S."/>
            <person name="Richardson P."/>
            <person name="Mackenzie C."/>
            <person name="Choudhary M."/>
            <person name="Larimer F."/>
            <person name="Hauser L.J."/>
            <person name="Land M."/>
            <person name="Donohue T.J."/>
            <person name="Kaplan S."/>
        </authorList>
    </citation>
    <scope>NUCLEOTIDE SEQUENCE [LARGE SCALE GENOMIC DNA]</scope>
    <source>
        <strain>ATCC 17023 / DSM 158 / JCM 6121 / CCUG 31486 / LMG 2827 / NBRC 12203 / NCIMB 8253 / ATH 2.4.1.</strain>
    </source>
</reference>
<proteinExistence type="inferred from homology"/>
<gene>
    <name evidence="1" type="primary">nifH</name>
    <name type="ordered locus">RHOS4_21450</name>
    <name type="ORF">RSP_0541</name>
</gene>
<accession>Q3J0H1</accession>
<organism>
    <name type="scientific">Cereibacter sphaeroides (strain ATCC 17023 / DSM 158 / JCM 6121 / CCUG 31486 / LMG 2827 / NBRC 12203 / NCIMB 8253 / ATH 2.4.1.)</name>
    <name type="common">Rhodobacter sphaeroides</name>
    <dbReference type="NCBI Taxonomy" id="272943"/>
    <lineage>
        <taxon>Bacteria</taxon>
        <taxon>Pseudomonadati</taxon>
        <taxon>Pseudomonadota</taxon>
        <taxon>Alphaproteobacteria</taxon>
        <taxon>Rhodobacterales</taxon>
        <taxon>Paracoccaceae</taxon>
        <taxon>Cereibacter</taxon>
    </lineage>
</organism>
<feature type="chain" id="PRO_1000211886" description="Nitrogenase iron protein">
    <location>
        <begin position="1"/>
        <end position="291"/>
    </location>
</feature>
<feature type="binding site" evidence="1">
    <location>
        <begin position="11"/>
        <end position="18"/>
    </location>
    <ligand>
        <name>ATP</name>
        <dbReference type="ChEBI" id="CHEBI:30616"/>
    </ligand>
</feature>
<feature type="binding site" evidence="1">
    <location>
        <position position="99"/>
    </location>
    <ligand>
        <name>[4Fe-4S] cluster</name>
        <dbReference type="ChEBI" id="CHEBI:49883"/>
        <note>ligand shared between dimeric partners</note>
    </ligand>
</feature>
<feature type="binding site" evidence="1">
    <location>
        <position position="133"/>
    </location>
    <ligand>
        <name>[4Fe-4S] cluster</name>
        <dbReference type="ChEBI" id="CHEBI:49883"/>
        <note>ligand shared between dimeric partners</note>
    </ligand>
</feature>
<feature type="modified residue" description="ADP-ribosylarginine; by dinitrogenase reductase ADP-ribosyltransferase" evidence="1">
    <location>
        <position position="102"/>
    </location>
</feature>
<name>NIFH_CERS4</name>